<comment type="function">
    <text evidence="1">May act as an acid--thiol ligase that activates carboxylic acids by forming acyl-CoAs.</text>
</comment>
<comment type="tissue specificity">
    <text evidence="2">Expressed in roots, leaves, stems, flowers and developing seeds.</text>
</comment>
<comment type="similarity">
    <text evidence="3">Belongs to the ATP-dependent AMP-binding enzyme family.</text>
</comment>
<proteinExistence type="evidence at transcript level"/>
<feature type="chain" id="PRO_0000415715" description="Probable acyl-activating enzyme 4">
    <location>
        <begin position="1"/>
        <end position="545"/>
    </location>
</feature>
<feature type="sequence conflict" description="In Ref. 1; AAM28621." evidence="3" ref="1">
    <original>S</original>
    <variation>L</variation>
    <location>
        <position position="123"/>
    </location>
</feature>
<gene>
    <name type="primary">AEE4</name>
    <name type="synonym">AMPBP4</name>
    <name type="ordered locus">At1g77240</name>
    <name type="ORF">T14N5.10</name>
</gene>
<keyword id="KW-0276">Fatty acid metabolism</keyword>
<keyword id="KW-0436">Ligase</keyword>
<keyword id="KW-0443">Lipid metabolism</keyword>
<keyword id="KW-1185">Reference proteome</keyword>
<organism>
    <name type="scientific">Arabidopsis thaliana</name>
    <name type="common">Mouse-ear cress</name>
    <dbReference type="NCBI Taxonomy" id="3702"/>
    <lineage>
        <taxon>Eukaryota</taxon>
        <taxon>Viridiplantae</taxon>
        <taxon>Streptophyta</taxon>
        <taxon>Embryophyta</taxon>
        <taxon>Tracheophyta</taxon>
        <taxon>Spermatophyta</taxon>
        <taxon>Magnoliopsida</taxon>
        <taxon>eudicotyledons</taxon>
        <taxon>Gunneridae</taxon>
        <taxon>Pentapetalae</taxon>
        <taxon>rosids</taxon>
        <taxon>malvids</taxon>
        <taxon>Brassicales</taxon>
        <taxon>Brassicaceae</taxon>
        <taxon>Camelineae</taxon>
        <taxon>Arabidopsis</taxon>
    </lineage>
</organism>
<protein>
    <recommendedName>
        <fullName>Probable acyl-activating enzyme 4</fullName>
        <ecNumber>6.2.1.-</ecNumber>
    </recommendedName>
    <alternativeName>
        <fullName>AMP-binding protein 4</fullName>
        <shortName>AtAMPBP4</shortName>
    </alternativeName>
</protein>
<accession>O80658</accession>
<accession>Q8LRT5</accession>
<sequence>MELLLPHASNSCPLTVLGFLERAASVFGDSPSLLHTTTVHTWSETHSRCLRIASTLSSASLGINRGQVVSVIGPNVPSVYELQFAVPMSGAVLNNINPRLDAHALSVLLRHSESKLVFVDHHSSSLVLEAVSFLPKDERPRLVILNDGNDMPSSSSADMDFLDTYEGFMERGDLRFKWVRPKSEWTPMVLNYTSGTTSSPKGVVHSHRSVFMSTINSLLDWSLPNRPVYLWTLPMFHANGWSYTWATAAVGARNICVTRVDVPTIFNLIDKYQVTHMCAAPMVLNMLTNHPAQKPLQSPVKVMTAGAPPPATVISKAEALGFDVSHGYGMTETGGLVVSCALKPEWDRLEPDERAKQKSRQGIRTAVFAEVDVRDPISGKSVKHDGATVGEIVFRGGSVMLGYYKDPEGTAASMREDGWFYTGDIGVMHPDGYLEVKDRSKDVVICGGENISSTELEAVLYTNPAIKEAAVVAKPDKMWGETPCAFVSLKYHDGSVTEREIREFCKTKLPKYMVPRNVVFLEELPKTSTGKIQKFLLRQMAKSLP</sequence>
<dbReference type="EC" id="6.2.1.-"/>
<dbReference type="EMBL" id="AF503763">
    <property type="protein sequence ID" value="AAM28621.1"/>
    <property type="molecule type" value="mRNA"/>
</dbReference>
<dbReference type="EMBL" id="AC004260">
    <property type="protein sequence ID" value="AAC34346.1"/>
    <property type="molecule type" value="Genomic_DNA"/>
</dbReference>
<dbReference type="EMBL" id="CP002684">
    <property type="protein sequence ID" value="AEE35953.1"/>
    <property type="molecule type" value="Genomic_DNA"/>
</dbReference>
<dbReference type="PIR" id="T00453">
    <property type="entry name" value="T00453"/>
</dbReference>
<dbReference type="SMR" id="O80658"/>
<dbReference type="FunCoup" id="O80658">
    <property type="interactions" value="106"/>
</dbReference>
<dbReference type="STRING" id="3702.O80658"/>
<dbReference type="PaxDb" id="3702-AT1G77240.1"/>
<dbReference type="ProteomicsDB" id="245091"/>
<dbReference type="EnsemblPlants" id="AT1G77240.1">
    <property type="protein sequence ID" value="AT1G77240.1"/>
    <property type="gene ID" value="AT1G77240"/>
</dbReference>
<dbReference type="GeneID" id="844060"/>
<dbReference type="Gramene" id="AT1G77240.1">
    <property type="protein sequence ID" value="AT1G77240.1"/>
    <property type="gene ID" value="AT1G77240"/>
</dbReference>
<dbReference type="KEGG" id="ath:AT1G77240"/>
<dbReference type="Araport" id="AT1G77240"/>
<dbReference type="TAIR" id="AT1G77240">
    <property type="gene designation" value="AAE2"/>
</dbReference>
<dbReference type="eggNOG" id="KOG1176">
    <property type="taxonomic scope" value="Eukaryota"/>
</dbReference>
<dbReference type="HOGENOM" id="CLU_000022_59_5_1"/>
<dbReference type="InParanoid" id="O80658"/>
<dbReference type="OMA" id="HRAIFIK"/>
<dbReference type="OrthoDB" id="10253115at2759"/>
<dbReference type="PhylomeDB" id="O80658"/>
<dbReference type="PRO" id="PR:O80658"/>
<dbReference type="Proteomes" id="UP000006548">
    <property type="component" value="Chromosome 1"/>
</dbReference>
<dbReference type="ExpressionAtlas" id="O80658">
    <property type="expression patterns" value="baseline and differential"/>
</dbReference>
<dbReference type="GO" id="GO:0016874">
    <property type="term" value="F:ligase activity"/>
    <property type="evidence" value="ECO:0007669"/>
    <property type="project" value="UniProtKB-KW"/>
</dbReference>
<dbReference type="GO" id="GO:0006631">
    <property type="term" value="P:fatty acid metabolic process"/>
    <property type="evidence" value="ECO:0007669"/>
    <property type="project" value="UniProtKB-KW"/>
</dbReference>
<dbReference type="CDD" id="cd12118">
    <property type="entry name" value="ttLC_FACS_AEE21_like"/>
    <property type="match status" value="1"/>
</dbReference>
<dbReference type="FunFam" id="3.30.300.30:FF:000008">
    <property type="entry name" value="2,3-dihydroxybenzoate-AMP ligase"/>
    <property type="match status" value="1"/>
</dbReference>
<dbReference type="Gene3D" id="3.30.300.30">
    <property type="match status" value="1"/>
</dbReference>
<dbReference type="Gene3D" id="3.40.50.12780">
    <property type="entry name" value="N-terminal domain of ligase-like"/>
    <property type="match status" value="1"/>
</dbReference>
<dbReference type="InterPro" id="IPR025110">
    <property type="entry name" value="AMP-bd_C"/>
</dbReference>
<dbReference type="InterPro" id="IPR045851">
    <property type="entry name" value="AMP-bd_C_sf"/>
</dbReference>
<dbReference type="InterPro" id="IPR020845">
    <property type="entry name" value="AMP-binding_CS"/>
</dbReference>
<dbReference type="InterPro" id="IPR000873">
    <property type="entry name" value="AMP-dep_synth/lig_dom"/>
</dbReference>
<dbReference type="InterPro" id="IPR042099">
    <property type="entry name" value="ANL_N_sf"/>
</dbReference>
<dbReference type="PANTHER" id="PTHR43859">
    <property type="entry name" value="ACYL-ACTIVATING ENZYME"/>
    <property type="match status" value="1"/>
</dbReference>
<dbReference type="PANTHER" id="PTHR43859:SF53">
    <property type="entry name" value="ACYL-ACTIVATING ENZYME 4-RELATED"/>
    <property type="match status" value="1"/>
</dbReference>
<dbReference type="Pfam" id="PF00501">
    <property type="entry name" value="AMP-binding"/>
    <property type="match status" value="1"/>
</dbReference>
<dbReference type="Pfam" id="PF13193">
    <property type="entry name" value="AMP-binding_C"/>
    <property type="match status" value="1"/>
</dbReference>
<dbReference type="SUPFAM" id="SSF56801">
    <property type="entry name" value="Acetyl-CoA synthetase-like"/>
    <property type="match status" value="1"/>
</dbReference>
<dbReference type="PROSITE" id="PS00455">
    <property type="entry name" value="AMP_BINDING"/>
    <property type="match status" value="1"/>
</dbReference>
<reference key="1">
    <citation type="journal article" date="2002" name="Plant Physiol.">
        <title>Arabidopsis contains nine long-chain acyl-coenzyme A synthetase genes that participate in fatty acid and glycerolipid metabolism.</title>
        <authorList>
            <person name="Shockey J.M."/>
            <person name="Fulda M.S."/>
            <person name="Browse J.A."/>
        </authorList>
    </citation>
    <scope>NUCLEOTIDE SEQUENCE [MRNA]</scope>
</reference>
<reference key="2">
    <citation type="journal article" date="2000" name="Nature">
        <title>Sequence and analysis of chromosome 1 of the plant Arabidopsis thaliana.</title>
        <authorList>
            <person name="Theologis A."/>
            <person name="Ecker J.R."/>
            <person name="Palm C.J."/>
            <person name="Federspiel N.A."/>
            <person name="Kaul S."/>
            <person name="White O."/>
            <person name="Alonso J."/>
            <person name="Altafi H."/>
            <person name="Araujo R."/>
            <person name="Bowman C.L."/>
            <person name="Brooks S.Y."/>
            <person name="Buehler E."/>
            <person name="Chan A."/>
            <person name="Chao Q."/>
            <person name="Chen H."/>
            <person name="Cheuk R.F."/>
            <person name="Chin C.W."/>
            <person name="Chung M.K."/>
            <person name="Conn L."/>
            <person name="Conway A.B."/>
            <person name="Conway A.R."/>
            <person name="Creasy T.H."/>
            <person name="Dewar K."/>
            <person name="Dunn P."/>
            <person name="Etgu P."/>
            <person name="Feldblyum T.V."/>
            <person name="Feng J.-D."/>
            <person name="Fong B."/>
            <person name="Fujii C.Y."/>
            <person name="Gill J.E."/>
            <person name="Goldsmith A.D."/>
            <person name="Haas B."/>
            <person name="Hansen N.F."/>
            <person name="Hughes B."/>
            <person name="Huizar L."/>
            <person name="Hunter J.L."/>
            <person name="Jenkins J."/>
            <person name="Johnson-Hopson C."/>
            <person name="Khan S."/>
            <person name="Khaykin E."/>
            <person name="Kim C.J."/>
            <person name="Koo H.L."/>
            <person name="Kremenetskaia I."/>
            <person name="Kurtz D.B."/>
            <person name="Kwan A."/>
            <person name="Lam B."/>
            <person name="Langin-Hooper S."/>
            <person name="Lee A."/>
            <person name="Lee J.M."/>
            <person name="Lenz C.A."/>
            <person name="Li J.H."/>
            <person name="Li Y.-P."/>
            <person name="Lin X."/>
            <person name="Liu S.X."/>
            <person name="Liu Z.A."/>
            <person name="Luros J.S."/>
            <person name="Maiti R."/>
            <person name="Marziali A."/>
            <person name="Militscher J."/>
            <person name="Miranda M."/>
            <person name="Nguyen M."/>
            <person name="Nierman W.C."/>
            <person name="Osborne B.I."/>
            <person name="Pai G."/>
            <person name="Peterson J."/>
            <person name="Pham P.K."/>
            <person name="Rizzo M."/>
            <person name="Rooney T."/>
            <person name="Rowley D."/>
            <person name="Sakano H."/>
            <person name="Salzberg S.L."/>
            <person name="Schwartz J.R."/>
            <person name="Shinn P."/>
            <person name="Southwick A.M."/>
            <person name="Sun H."/>
            <person name="Tallon L.J."/>
            <person name="Tambunga G."/>
            <person name="Toriumi M.J."/>
            <person name="Town C.D."/>
            <person name="Utterback T."/>
            <person name="Van Aken S."/>
            <person name="Vaysberg M."/>
            <person name="Vysotskaia V.S."/>
            <person name="Walker M."/>
            <person name="Wu D."/>
            <person name="Yu G."/>
            <person name="Fraser C.M."/>
            <person name="Venter J.C."/>
            <person name="Davis R.W."/>
        </authorList>
    </citation>
    <scope>NUCLEOTIDE SEQUENCE [LARGE SCALE GENOMIC DNA]</scope>
    <source>
        <strain>cv. Columbia</strain>
    </source>
</reference>
<reference key="3">
    <citation type="journal article" date="2017" name="Plant J.">
        <title>Araport11: a complete reannotation of the Arabidopsis thaliana reference genome.</title>
        <authorList>
            <person name="Cheng C.Y."/>
            <person name="Krishnakumar V."/>
            <person name="Chan A.P."/>
            <person name="Thibaud-Nissen F."/>
            <person name="Schobel S."/>
            <person name="Town C.D."/>
        </authorList>
    </citation>
    <scope>GENOME REANNOTATION</scope>
    <source>
        <strain>cv. Columbia</strain>
    </source>
</reference>
<reference key="4">
    <citation type="journal article" date="2003" name="Plant Physiol.">
        <title>Arabidopsis contains a large superfamily of acyl-activating enzymes. Phylogenetic and biochemical analysis reveals a new class of acyl-coenzyme a synthetases.</title>
        <authorList>
            <person name="Shockey J.M."/>
            <person name="Fulda M.S."/>
            <person name="Browse J."/>
        </authorList>
    </citation>
    <scope>TISSUE SPECIFICITY</scope>
    <scope>GENE FAMILY</scope>
    <scope>NOMENCLATURE</scope>
</reference>
<name>AAE4_ARATH</name>
<evidence type="ECO:0000250" key="1"/>
<evidence type="ECO:0000269" key="2">
    <source>
    </source>
</evidence>
<evidence type="ECO:0000305" key="3"/>